<gene>
    <name evidence="1" type="primary">pepA</name>
    <name type="ordered locus">CGSHiGG_02275</name>
</gene>
<sequence length="491" mass="53572">MKYQAKNTALSQATDCIVLGIYENNKFSKSFNEIDQLTQGYLNDLVKSGELTGKLAQTILLRDLQGLSAKRLLIVGCGKKGELTERQYKQIIQAVLKTLKETNTREVISYLTEIELKDRDLYWNIRFAIETIEHTNYQFDHFKSQKAETSVLESFVFNTDCNQAQQAISHANAISSGIKAARDIANMPPNICNPAYLAEQAKNLAENSTALSLKVVDEEEMAKLGMNAYLAVSKGSENRAYMSVLTFNNALDKNAKPIVLVGKGLTFDAGGISLKPAADMDEMKYDMCGAASVFGTMKAIAQLNLPLNVIGVLAGCENLPDGNAYRPGDILTTMNGLTVEVLNTDAEGRLVLCDTLTYVERFEPELVIDVATLTGACVVALGQHNSGLVSTDNNLANALLQAATETTDKAWRLPLSEEYQEQLKSPFADLANIGGRWGGAITAGAFLSNFTKKYRWAHLDIAGTAWLQGANKGATGRPVSLLTQFLINQVK</sequence>
<proteinExistence type="inferred from homology"/>
<reference key="1">
    <citation type="journal article" date="2007" name="Genome Biol.">
        <title>Characterization and modeling of the Haemophilus influenzae core and supragenomes based on the complete genomic sequences of Rd and 12 clinical nontypeable strains.</title>
        <authorList>
            <person name="Hogg J.S."/>
            <person name="Hu F.Z."/>
            <person name="Janto B."/>
            <person name="Boissy R."/>
            <person name="Hayes J."/>
            <person name="Keefe R."/>
            <person name="Post J.C."/>
            <person name="Ehrlich G.D."/>
        </authorList>
    </citation>
    <scope>NUCLEOTIDE SEQUENCE [LARGE SCALE GENOMIC DNA]</scope>
    <source>
        <strain>PittGG</strain>
    </source>
</reference>
<dbReference type="EC" id="3.4.11.1" evidence="1"/>
<dbReference type="EC" id="3.4.11.10" evidence="1"/>
<dbReference type="EMBL" id="CP000672">
    <property type="protein sequence ID" value="ABQ99497.1"/>
    <property type="molecule type" value="Genomic_DNA"/>
</dbReference>
<dbReference type="SMR" id="A5UFE2"/>
<dbReference type="MEROPS" id="M17.003"/>
<dbReference type="KEGG" id="hiq:CGSHiGG_02275"/>
<dbReference type="HOGENOM" id="CLU_013734_2_2_6"/>
<dbReference type="Proteomes" id="UP000001990">
    <property type="component" value="Chromosome"/>
</dbReference>
<dbReference type="GO" id="GO:0005737">
    <property type="term" value="C:cytoplasm"/>
    <property type="evidence" value="ECO:0007669"/>
    <property type="project" value="UniProtKB-SubCell"/>
</dbReference>
<dbReference type="GO" id="GO:0030145">
    <property type="term" value="F:manganese ion binding"/>
    <property type="evidence" value="ECO:0007669"/>
    <property type="project" value="UniProtKB-UniRule"/>
</dbReference>
<dbReference type="GO" id="GO:0070006">
    <property type="term" value="F:metalloaminopeptidase activity"/>
    <property type="evidence" value="ECO:0007669"/>
    <property type="project" value="InterPro"/>
</dbReference>
<dbReference type="GO" id="GO:0006508">
    <property type="term" value="P:proteolysis"/>
    <property type="evidence" value="ECO:0007669"/>
    <property type="project" value="UniProtKB-KW"/>
</dbReference>
<dbReference type="CDD" id="cd00433">
    <property type="entry name" value="Peptidase_M17"/>
    <property type="match status" value="1"/>
</dbReference>
<dbReference type="FunFam" id="3.40.630.10:FF:000004">
    <property type="entry name" value="Probable cytosol aminopeptidase"/>
    <property type="match status" value="1"/>
</dbReference>
<dbReference type="Gene3D" id="3.40.220.10">
    <property type="entry name" value="Leucine Aminopeptidase, subunit E, domain 1"/>
    <property type="match status" value="1"/>
</dbReference>
<dbReference type="Gene3D" id="3.40.630.10">
    <property type="entry name" value="Zn peptidases"/>
    <property type="match status" value="1"/>
</dbReference>
<dbReference type="HAMAP" id="MF_00181">
    <property type="entry name" value="Cytosol_peptidase_M17"/>
    <property type="match status" value="1"/>
</dbReference>
<dbReference type="InterPro" id="IPR011356">
    <property type="entry name" value="Leucine_aapep/pepB"/>
</dbReference>
<dbReference type="InterPro" id="IPR043472">
    <property type="entry name" value="Macro_dom-like"/>
</dbReference>
<dbReference type="InterPro" id="IPR000819">
    <property type="entry name" value="Peptidase_M17_C"/>
</dbReference>
<dbReference type="InterPro" id="IPR023042">
    <property type="entry name" value="Peptidase_M17_leu_NH2_pept"/>
</dbReference>
<dbReference type="InterPro" id="IPR008283">
    <property type="entry name" value="Peptidase_M17_N"/>
</dbReference>
<dbReference type="NCBIfam" id="NF002073">
    <property type="entry name" value="PRK00913.1-2"/>
    <property type="match status" value="1"/>
</dbReference>
<dbReference type="NCBIfam" id="NF002074">
    <property type="entry name" value="PRK00913.1-4"/>
    <property type="match status" value="1"/>
</dbReference>
<dbReference type="NCBIfam" id="NF002077">
    <property type="entry name" value="PRK00913.2-4"/>
    <property type="match status" value="1"/>
</dbReference>
<dbReference type="PANTHER" id="PTHR11963:SF23">
    <property type="entry name" value="CYTOSOL AMINOPEPTIDASE"/>
    <property type="match status" value="1"/>
</dbReference>
<dbReference type="PANTHER" id="PTHR11963">
    <property type="entry name" value="LEUCINE AMINOPEPTIDASE-RELATED"/>
    <property type="match status" value="1"/>
</dbReference>
<dbReference type="Pfam" id="PF00883">
    <property type="entry name" value="Peptidase_M17"/>
    <property type="match status" value="1"/>
</dbReference>
<dbReference type="Pfam" id="PF02789">
    <property type="entry name" value="Peptidase_M17_N"/>
    <property type="match status" value="1"/>
</dbReference>
<dbReference type="PRINTS" id="PR00481">
    <property type="entry name" value="LAMNOPPTDASE"/>
</dbReference>
<dbReference type="SUPFAM" id="SSF52949">
    <property type="entry name" value="Macro domain-like"/>
    <property type="match status" value="1"/>
</dbReference>
<dbReference type="SUPFAM" id="SSF53187">
    <property type="entry name" value="Zn-dependent exopeptidases"/>
    <property type="match status" value="1"/>
</dbReference>
<dbReference type="PROSITE" id="PS00631">
    <property type="entry name" value="CYTOSOL_AP"/>
    <property type="match status" value="1"/>
</dbReference>
<keyword id="KW-0031">Aminopeptidase</keyword>
<keyword id="KW-0963">Cytoplasm</keyword>
<keyword id="KW-0378">Hydrolase</keyword>
<keyword id="KW-0464">Manganese</keyword>
<keyword id="KW-0479">Metal-binding</keyword>
<keyword id="KW-0645">Protease</keyword>
<name>AMPA_HAEIG</name>
<accession>A5UFE2</accession>
<comment type="function">
    <text evidence="1">Presumably involved in the processing and regular turnover of intracellular proteins. Catalyzes the removal of unsubstituted N-terminal amino acids from various peptides.</text>
</comment>
<comment type="catalytic activity">
    <reaction evidence="1">
        <text>Release of an N-terminal amino acid, Xaa-|-Yaa-, in which Xaa is preferably Leu, but may be other amino acids including Pro although not Arg or Lys, and Yaa may be Pro. Amino acid amides and methyl esters are also readily hydrolyzed, but rates on arylamides are exceedingly low.</text>
        <dbReference type="EC" id="3.4.11.1"/>
    </reaction>
</comment>
<comment type="catalytic activity">
    <reaction evidence="1">
        <text>Release of an N-terminal amino acid, preferentially leucine, but not glutamic or aspartic acids.</text>
        <dbReference type="EC" id="3.4.11.10"/>
    </reaction>
</comment>
<comment type="cofactor">
    <cofactor evidence="1">
        <name>Mn(2+)</name>
        <dbReference type="ChEBI" id="CHEBI:29035"/>
    </cofactor>
    <text evidence="1">Binds 2 manganese ions per subunit.</text>
</comment>
<comment type="subcellular location">
    <subcellularLocation>
        <location evidence="1">Cytoplasm</location>
    </subcellularLocation>
</comment>
<comment type="similarity">
    <text evidence="1">Belongs to the peptidase M17 family.</text>
</comment>
<organism>
    <name type="scientific">Haemophilus influenzae (strain PittGG)</name>
    <dbReference type="NCBI Taxonomy" id="374931"/>
    <lineage>
        <taxon>Bacteria</taxon>
        <taxon>Pseudomonadati</taxon>
        <taxon>Pseudomonadota</taxon>
        <taxon>Gammaproteobacteria</taxon>
        <taxon>Pasteurellales</taxon>
        <taxon>Pasteurellaceae</taxon>
        <taxon>Haemophilus</taxon>
    </lineage>
</organism>
<protein>
    <recommendedName>
        <fullName evidence="1">Probable cytosol aminopeptidase</fullName>
        <ecNumber evidence="1">3.4.11.1</ecNumber>
    </recommendedName>
    <alternativeName>
        <fullName evidence="1">Leucine aminopeptidase</fullName>
        <shortName evidence="1">LAP</shortName>
        <ecNumber evidence="1">3.4.11.10</ecNumber>
    </alternativeName>
    <alternativeName>
        <fullName evidence="1">Leucyl aminopeptidase</fullName>
    </alternativeName>
</protein>
<feature type="chain" id="PRO_1000019922" description="Probable cytosol aminopeptidase">
    <location>
        <begin position="1"/>
        <end position="491"/>
    </location>
</feature>
<feature type="active site" evidence="1">
    <location>
        <position position="275"/>
    </location>
</feature>
<feature type="active site" evidence="1">
    <location>
        <position position="349"/>
    </location>
</feature>
<feature type="binding site" evidence="1">
    <location>
        <position position="263"/>
    </location>
    <ligand>
        <name>Mn(2+)</name>
        <dbReference type="ChEBI" id="CHEBI:29035"/>
        <label>2</label>
    </ligand>
</feature>
<feature type="binding site" evidence="1">
    <location>
        <position position="268"/>
    </location>
    <ligand>
        <name>Mn(2+)</name>
        <dbReference type="ChEBI" id="CHEBI:29035"/>
        <label>1</label>
    </ligand>
</feature>
<feature type="binding site" evidence="1">
    <location>
        <position position="268"/>
    </location>
    <ligand>
        <name>Mn(2+)</name>
        <dbReference type="ChEBI" id="CHEBI:29035"/>
        <label>2</label>
    </ligand>
</feature>
<feature type="binding site" evidence="1">
    <location>
        <position position="286"/>
    </location>
    <ligand>
        <name>Mn(2+)</name>
        <dbReference type="ChEBI" id="CHEBI:29035"/>
        <label>2</label>
    </ligand>
</feature>
<feature type="binding site" evidence="1">
    <location>
        <position position="345"/>
    </location>
    <ligand>
        <name>Mn(2+)</name>
        <dbReference type="ChEBI" id="CHEBI:29035"/>
        <label>1</label>
    </ligand>
</feature>
<feature type="binding site" evidence="1">
    <location>
        <position position="347"/>
    </location>
    <ligand>
        <name>Mn(2+)</name>
        <dbReference type="ChEBI" id="CHEBI:29035"/>
        <label>1</label>
    </ligand>
</feature>
<feature type="binding site" evidence="1">
    <location>
        <position position="347"/>
    </location>
    <ligand>
        <name>Mn(2+)</name>
        <dbReference type="ChEBI" id="CHEBI:29035"/>
        <label>2</label>
    </ligand>
</feature>
<evidence type="ECO:0000255" key="1">
    <source>
        <dbReference type="HAMAP-Rule" id="MF_00181"/>
    </source>
</evidence>